<keyword id="KW-0002">3D-structure</keyword>
<keyword id="KW-0007">Acetylation</keyword>
<keyword id="KW-0225">Disease variant</keyword>
<keyword id="KW-0887">Epilepsy</keyword>
<keyword id="KW-0991">Intellectual disability</keyword>
<keyword id="KW-1017">Isopeptide bond</keyword>
<keyword id="KW-0479">Metal-binding</keyword>
<keyword id="KW-0539">Nucleus</keyword>
<keyword id="KW-0597">Phosphoprotein</keyword>
<keyword id="KW-1267">Proteomics identification</keyword>
<keyword id="KW-1185">Reference proteome</keyword>
<keyword id="KW-0832">Ubl conjugation</keyword>
<keyword id="KW-0879">Wnt signaling pathway</keyword>
<keyword id="KW-0862">Zinc</keyword>
<dbReference type="EMBL" id="X16937">
    <property type="protein sequence ID" value="CAA34811.1"/>
    <property type="molecule type" value="mRNA"/>
</dbReference>
<dbReference type="EMBL" id="X16312">
    <property type="protein sequence ID" value="CAA34379.1"/>
    <property type="molecule type" value="mRNA"/>
</dbReference>
<dbReference type="EMBL" id="M30448">
    <property type="protein sequence ID" value="AAA52123.1"/>
    <property type="molecule type" value="mRNA"/>
</dbReference>
<dbReference type="EMBL" id="X57152">
    <property type="protein sequence ID" value="CAA40442.1"/>
    <property type="molecule type" value="Genomic_DNA"/>
</dbReference>
<dbReference type="EMBL" id="AY113186">
    <property type="protein sequence ID" value="AAM50092.1"/>
    <property type="molecule type" value="mRNA"/>
</dbReference>
<dbReference type="EMBL" id="CR541699">
    <property type="protein sequence ID" value="CAG46500.1"/>
    <property type="molecule type" value="mRNA"/>
</dbReference>
<dbReference type="EMBL" id="AF129756">
    <property type="protein sequence ID" value="AAD18081.1"/>
    <property type="molecule type" value="Genomic_DNA"/>
</dbReference>
<dbReference type="EMBL" id="BA000025">
    <property type="protein sequence ID" value="BAB63386.1"/>
    <property type="molecule type" value="Genomic_DNA"/>
</dbReference>
<dbReference type="EMBL" id="DQ314868">
    <property type="protein sequence ID" value="ABC40727.1"/>
    <property type="molecule type" value="Genomic_DNA"/>
</dbReference>
<dbReference type="EMBL" id="AK311860">
    <property type="protein sequence ID" value="BAG34801.1"/>
    <property type="molecule type" value="mRNA"/>
</dbReference>
<dbReference type="EMBL" id="AL662899">
    <property type="status" value="NOT_ANNOTATED_CDS"/>
    <property type="molecule type" value="Genomic_DNA"/>
</dbReference>
<dbReference type="EMBL" id="AL670886">
    <property type="status" value="NOT_ANNOTATED_CDS"/>
    <property type="molecule type" value="Genomic_DNA"/>
</dbReference>
<dbReference type="EMBL" id="AL805934">
    <property type="status" value="NOT_ANNOTATED_CDS"/>
    <property type="molecule type" value="Genomic_DNA"/>
</dbReference>
<dbReference type="EMBL" id="BX511262">
    <property type="status" value="NOT_ANNOTATED_CDS"/>
    <property type="molecule type" value="Genomic_DNA"/>
</dbReference>
<dbReference type="EMBL" id="CR354443">
    <property type="status" value="NOT_ANNOTATED_CDS"/>
    <property type="molecule type" value="Genomic_DNA"/>
</dbReference>
<dbReference type="EMBL" id="CR753842">
    <property type="status" value="NOT_ANNOTATED_CDS"/>
    <property type="molecule type" value="Genomic_DNA"/>
</dbReference>
<dbReference type="EMBL" id="CR759761">
    <property type="status" value="NOT_ANNOTATED_CDS"/>
    <property type="molecule type" value="Genomic_DNA"/>
</dbReference>
<dbReference type="EMBL" id="CH471081">
    <property type="protein sequence ID" value="EAX03473.1"/>
    <property type="molecule type" value="Genomic_DNA"/>
</dbReference>
<dbReference type="EMBL" id="BC112017">
    <property type="protein sequence ID" value="AAI12018.1"/>
    <property type="molecule type" value="mRNA"/>
</dbReference>
<dbReference type="EMBL" id="BC112019">
    <property type="protein sequence ID" value="AAI12020.1"/>
    <property type="molecule type" value="mRNA"/>
</dbReference>
<dbReference type="CCDS" id="CCDS4712.1"/>
<dbReference type="PIR" id="A39459">
    <property type="entry name" value="A39459"/>
</dbReference>
<dbReference type="RefSeq" id="NP_001269314.1">
    <property type="nucleotide sequence ID" value="NM_001282385.1"/>
</dbReference>
<dbReference type="RefSeq" id="NP_001311.3">
    <property type="nucleotide sequence ID" value="NM_001320.6"/>
</dbReference>
<dbReference type="PDB" id="1DS5">
    <property type="method" value="X-ray"/>
    <property type="resolution" value="3.16 A"/>
    <property type="chains" value="E/F/G/H=181-203"/>
</dbReference>
<dbReference type="PDB" id="1JWH">
    <property type="method" value="X-ray"/>
    <property type="resolution" value="3.10 A"/>
    <property type="chains" value="C/D=1-215"/>
</dbReference>
<dbReference type="PDB" id="1QF8">
    <property type="method" value="X-ray"/>
    <property type="resolution" value="1.74 A"/>
    <property type="chains" value="A/B=1-182"/>
</dbReference>
<dbReference type="PDB" id="3EED">
    <property type="method" value="X-ray"/>
    <property type="resolution" value="2.80 A"/>
    <property type="chains" value="A/B=1-193"/>
</dbReference>
<dbReference type="PDB" id="4DGL">
    <property type="method" value="X-ray"/>
    <property type="resolution" value="3.00 A"/>
    <property type="chains" value="A/B=1-215"/>
</dbReference>
<dbReference type="PDB" id="4MD7">
    <property type="method" value="X-ray"/>
    <property type="resolution" value="3.10 A"/>
    <property type="chains" value="A/B/C/D=1-215"/>
</dbReference>
<dbReference type="PDB" id="4MD8">
    <property type="method" value="X-ray"/>
    <property type="resolution" value="3.30 A"/>
    <property type="chains" value="A/B/C/D=1-215"/>
</dbReference>
<dbReference type="PDB" id="4MD9">
    <property type="method" value="X-ray"/>
    <property type="resolution" value="3.50 A"/>
    <property type="chains" value="A/B/C/D/I/J/N/O=1-215"/>
</dbReference>
<dbReference type="PDB" id="4NH1">
    <property type="method" value="X-ray"/>
    <property type="resolution" value="3.30 A"/>
    <property type="chains" value="C/D=1-215"/>
</dbReference>
<dbReference type="PDB" id="6Q38">
    <property type="method" value="X-ray"/>
    <property type="resolution" value="1.74 A"/>
    <property type="chains" value="C=186-193"/>
</dbReference>
<dbReference type="PDBsum" id="1DS5"/>
<dbReference type="PDBsum" id="1JWH"/>
<dbReference type="PDBsum" id="1QF8"/>
<dbReference type="PDBsum" id="3EED"/>
<dbReference type="PDBsum" id="4DGL"/>
<dbReference type="PDBsum" id="4MD7"/>
<dbReference type="PDBsum" id="4MD8"/>
<dbReference type="PDBsum" id="4MD9"/>
<dbReference type="PDBsum" id="4NH1"/>
<dbReference type="PDBsum" id="6Q38"/>
<dbReference type="SMR" id="P67870"/>
<dbReference type="BioGRID" id="107843">
    <property type="interactions" value="625"/>
</dbReference>
<dbReference type="ComplexPortal" id="CPX-2428">
    <property type="entry name" value="Casein kinase II complex, CSNK2A2 variant"/>
</dbReference>
<dbReference type="ComplexPortal" id="CPX-2437">
    <property type="entry name" value="Casein kinase II complex, CSNK2A1-CNSK2A2 variant"/>
</dbReference>
<dbReference type="ComplexPortal" id="CPX-914">
    <property type="entry name" value="Casein kinase II complex, CSNK2A1 variant"/>
</dbReference>
<dbReference type="CORUM" id="P67870"/>
<dbReference type="DIP" id="DIP-131N"/>
<dbReference type="FunCoup" id="P67870">
    <property type="interactions" value="3553"/>
</dbReference>
<dbReference type="IntAct" id="P67870">
    <property type="interactions" value="487"/>
</dbReference>
<dbReference type="MINT" id="P67870"/>
<dbReference type="STRING" id="9606.ENSP00000365042"/>
<dbReference type="BindingDB" id="P67870"/>
<dbReference type="ChEMBL" id="CHEMBL2358"/>
<dbReference type="DrugBank" id="DB00171">
    <property type="generic name" value="ATP"/>
</dbReference>
<dbReference type="DrugBank" id="DB04216">
    <property type="generic name" value="Quercetin"/>
</dbReference>
<dbReference type="MoonDB" id="P67870">
    <property type="type" value="Predicted"/>
</dbReference>
<dbReference type="GlyGen" id="P67870">
    <property type="glycosylation" value="1 site, 1 O-linked glycan (1 site)"/>
</dbReference>
<dbReference type="iPTMnet" id="P67870"/>
<dbReference type="MetOSite" id="P67870"/>
<dbReference type="PhosphoSitePlus" id="P67870"/>
<dbReference type="SwissPalm" id="P67870"/>
<dbReference type="BioMuta" id="CSNK2B"/>
<dbReference type="DMDM" id="54037520"/>
<dbReference type="jPOST" id="P67870"/>
<dbReference type="MassIVE" id="P67870"/>
<dbReference type="PaxDb" id="9606-ENSP00000365042"/>
<dbReference type="PeptideAtlas" id="P67870"/>
<dbReference type="ProteomicsDB" id="57524"/>
<dbReference type="Pumba" id="P67870"/>
<dbReference type="Antibodypedia" id="1045">
    <property type="antibodies" value="622 antibodies from 40 providers"/>
</dbReference>
<dbReference type="DNASU" id="1460"/>
<dbReference type="Ensembl" id="ENST00000375865.6">
    <property type="protein sequence ID" value="ENSP00000365025.2"/>
    <property type="gene ID" value="ENSG00000204435.15"/>
</dbReference>
<dbReference type="Ensembl" id="ENST00000375866.2">
    <property type="protein sequence ID" value="ENSP00000365026.2"/>
    <property type="gene ID" value="ENSG00000204435.15"/>
</dbReference>
<dbReference type="Ensembl" id="ENST00000375882.7">
    <property type="protein sequence ID" value="ENSP00000365042.3"/>
    <property type="gene ID" value="ENSG00000204435.15"/>
</dbReference>
<dbReference type="Ensembl" id="ENST00000383427.6">
    <property type="protein sequence ID" value="ENSP00000372919.2"/>
    <property type="gene ID" value="ENSG00000206406.9"/>
</dbReference>
<dbReference type="Ensembl" id="ENST00000383433.8">
    <property type="protein sequence ID" value="ENSP00000372925.4"/>
    <property type="gene ID" value="ENSG00000206406.9"/>
</dbReference>
<dbReference type="Ensembl" id="ENST00000400110.5">
    <property type="protein sequence ID" value="ENSP00000382980.1"/>
    <property type="gene ID" value="ENSG00000206406.9"/>
</dbReference>
<dbReference type="Ensembl" id="ENST00000412802.5">
    <property type="protein sequence ID" value="ENSP00000413469.1"/>
    <property type="gene ID" value="ENSG00000224774.7"/>
</dbReference>
<dbReference type="Ensembl" id="ENST00000418230.5">
    <property type="protein sequence ID" value="ENSP00000411322.1"/>
    <property type="gene ID" value="ENSG00000228875.8"/>
</dbReference>
<dbReference type="Ensembl" id="ENST00000422567.6">
    <property type="protein sequence ID" value="ENSP00000407018.2"/>
    <property type="gene ID" value="ENSG00000224398.7"/>
</dbReference>
<dbReference type="Ensembl" id="ENST00000429633.5">
    <property type="protein sequence ID" value="ENSP00000409510.1"/>
    <property type="gene ID" value="ENSG00000230700.11"/>
</dbReference>
<dbReference type="Ensembl" id="ENST00000431476.5">
    <property type="protein sequence ID" value="ENSP00000394855.1"/>
    <property type="gene ID" value="ENSG00000224398.7"/>
</dbReference>
<dbReference type="Ensembl" id="ENST00000436169.5">
    <property type="protein sequence ID" value="ENSP00000412520.1"/>
    <property type="gene ID" value="ENSG00000224398.7"/>
</dbReference>
<dbReference type="Ensembl" id="ENST00000443673.6">
    <property type="protein sequence ID" value="ENSP00000400188.2"/>
    <property type="gene ID" value="ENSG00000230700.11"/>
</dbReference>
<dbReference type="Ensembl" id="ENST00000448596.1">
    <property type="protein sequence ID" value="ENSP00000391038.1"/>
    <property type="gene ID" value="ENSG00000232960.12"/>
</dbReference>
<dbReference type="Ensembl" id="ENST00000451917.6">
    <property type="protein sequence ID" value="ENSP00000415303.2"/>
    <property type="gene ID" value="ENSG00000224774.7"/>
</dbReference>
<dbReference type="Ensembl" id="ENST00000452985.6">
    <property type="protein sequence ID" value="ENSP00000415237.2"/>
    <property type="gene ID" value="ENSG00000228875.8"/>
</dbReference>
<dbReference type="Ensembl" id="ENST00000453234.5">
    <property type="protein sequence ID" value="ENSP00000395275.1"/>
    <property type="gene ID" value="ENSG00000224774.7"/>
</dbReference>
<dbReference type="Ensembl" id="ENST00000454382.6">
    <property type="protein sequence ID" value="ENSP00000390900.2"/>
    <property type="gene ID" value="ENSG00000232960.12"/>
</dbReference>
<dbReference type="Ensembl" id="ENST00000454511.5">
    <property type="protein sequence ID" value="ENSP00000393756.1"/>
    <property type="gene ID" value="ENSG00000232960.12"/>
</dbReference>
<dbReference type="Ensembl" id="ENST00000455161.1">
    <property type="protein sequence ID" value="ENSP00000407379.1"/>
    <property type="gene ID" value="ENSG00000230700.11"/>
</dbReference>
<dbReference type="Ensembl" id="ENST00000458330.5">
    <property type="protein sequence ID" value="ENSP00000410802.1"/>
    <property type="gene ID" value="ENSG00000228875.8"/>
</dbReference>
<dbReference type="GeneID" id="1460"/>
<dbReference type="KEGG" id="hsa:1460"/>
<dbReference type="MANE-Select" id="ENST00000375882.7">
    <property type="protein sequence ID" value="ENSP00000365042.3"/>
    <property type="RefSeq nucleotide sequence ID" value="NM_001320.7"/>
    <property type="RefSeq protein sequence ID" value="NP_001311.3"/>
</dbReference>
<dbReference type="UCSC" id="uc003nvr.3">
    <property type="organism name" value="human"/>
</dbReference>
<dbReference type="AGR" id="HGNC:2460"/>
<dbReference type="CTD" id="1460"/>
<dbReference type="DisGeNET" id="1460"/>
<dbReference type="GeneCards" id="CSNK2B"/>
<dbReference type="GeneReviews" id="CSNK2B"/>
<dbReference type="HGNC" id="HGNC:2460">
    <property type="gene designation" value="CSNK2B"/>
</dbReference>
<dbReference type="HPA" id="ENSG00000204435">
    <property type="expression patterns" value="Low tissue specificity"/>
</dbReference>
<dbReference type="MalaCards" id="CSNK2B"/>
<dbReference type="MIM" id="115441">
    <property type="type" value="gene"/>
</dbReference>
<dbReference type="MIM" id="618732">
    <property type="type" value="phenotype"/>
</dbReference>
<dbReference type="neXtProt" id="NX_P67870"/>
<dbReference type="OpenTargets" id="ENSG00000204435"/>
<dbReference type="Orphanet" id="178469">
    <property type="disease" value="Autosomal dominant non-syndromic intellectual disability"/>
</dbReference>
<dbReference type="Orphanet" id="689397">
    <property type="disease" value="Poirier-Bienvenue neurodevelopmental syndrome"/>
</dbReference>
<dbReference type="PharmGKB" id="PA26960"/>
<dbReference type="VEuPathDB" id="HostDB:ENSG00000204435"/>
<dbReference type="eggNOG" id="KOG3092">
    <property type="taxonomic scope" value="Eukaryota"/>
</dbReference>
<dbReference type="GeneTree" id="ENSGT00390000003781"/>
<dbReference type="HOGENOM" id="CLU_034027_3_3_1"/>
<dbReference type="InParanoid" id="P67870"/>
<dbReference type="OrthoDB" id="3971593at2759"/>
<dbReference type="PAN-GO" id="P67870">
    <property type="GO annotations" value="4 GO annotations based on evolutionary models"/>
</dbReference>
<dbReference type="PhylomeDB" id="P67870"/>
<dbReference type="TreeFam" id="TF314462"/>
<dbReference type="PathwayCommons" id="P67870"/>
<dbReference type="Reactome" id="R-HSA-1483191">
    <property type="pathway name" value="Synthesis of PC"/>
</dbReference>
<dbReference type="Reactome" id="R-HSA-201688">
    <property type="pathway name" value="WNT mediated activation of DVL"/>
</dbReference>
<dbReference type="Reactome" id="R-HSA-2514853">
    <property type="pathway name" value="Condensation of Prometaphase Chromosomes"/>
</dbReference>
<dbReference type="Reactome" id="R-HSA-445144">
    <property type="pathway name" value="Signal transduction by L1"/>
</dbReference>
<dbReference type="Reactome" id="R-HSA-6798695">
    <property type="pathway name" value="Neutrophil degranulation"/>
</dbReference>
<dbReference type="Reactome" id="R-HSA-6804756">
    <property type="pathway name" value="Regulation of TP53 Activity through Phosphorylation"/>
</dbReference>
<dbReference type="Reactome" id="R-HSA-6814122">
    <property type="pathway name" value="Cooperation of PDCL (PhLP1) and TRiC/CCT in G-protein beta folding"/>
</dbReference>
<dbReference type="Reactome" id="R-HSA-8934903">
    <property type="pathway name" value="Receptor Mediated Mitophagy"/>
</dbReference>
<dbReference type="Reactome" id="R-HSA-8939243">
    <property type="pathway name" value="RUNX1 interacts with co-factors whose precise effect on RUNX1 targets is not known"/>
</dbReference>
<dbReference type="Reactome" id="R-HSA-8948751">
    <property type="pathway name" value="Regulation of PTEN stability and activity"/>
</dbReference>
<dbReference type="Reactome" id="R-HSA-9755511">
    <property type="pathway name" value="KEAP1-NFE2L2 pathway"/>
</dbReference>
<dbReference type="Reactome" id="R-HSA-9828806">
    <property type="pathway name" value="Maturation of hRSV A proteins"/>
</dbReference>
<dbReference type="SignaLink" id="P67870"/>
<dbReference type="SIGNOR" id="P67870"/>
<dbReference type="BioGRID-ORCS" id="1460">
    <property type="hits" value="737 hits in 1197 CRISPR screens"/>
</dbReference>
<dbReference type="CD-CODE" id="91857CE7">
    <property type="entry name" value="Nucleolus"/>
</dbReference>
<dbReference type="ChiTaRS" id="CSNK2B">
    <property type="organism name" value="human"/>
</dbReference>
<dbReference type="EvolutionaryTrace" id="P67870"/>
<dbReference type="GeneWiki" id="CSNK2B"/>
<dbReference type="GenomeRNAi" id="1460"/>
<dbReference type="Pharos" id="P67870">
    <property type="development level" value="Tbio"/>
</dbReference>
<dbReference type="PRO" id="PR:P67870"/>
<dbReference type="Proteomes" id="UP000005640">
    <property type="component" value="Chromosome 6"/>
</dbReference>
<dbReference type="RNAct" id="P67870">
    <property type="molecule type" value="protein"/>
</dbReference>
<dbReference type="Bgee" id="ENSG00000204435">
    <property type="expression patterns" value="Expressed in left testis and 95 other cell types or tissues"/>
</dbReference>
<dbReference type="ExpressionAtlas" id="P67870">
    <property type="expression patterns" value="baseline and differential"/>
</dbReference>
<dbReference type="GO" id="GO:0000785">
    <property type="term" value="C:chromatin"/>
    <property type="evidence" value="ECO:0000314"/>
    <property type="project" value="UniProt"/>
</dbReference>
<dbReference type="GO" id="GO:0005737">
    <property type="term" value="C:cytoplasm"/>
    <property type="evidence" value="ECO:0000314"/>
    <property type="project" value="BHF-UCL"/>
</dbReference>
<dbReference type="GO" id="GO:0005829">
    <property type="term" value="C:cytosol"/>
    <property type="evidence" value="ECO:0000304"/>
    <property type="project" value="Reactome"/>
</dbReference>
<dbReference type="GO" id="GO:0070062">
    <property type="term" value="C:extracellular exosome"/>
    <property type="evidence" value="ECO:0007005"/>
    <property type="project" value="UniProtKB"/>
</dbReference>
<dbReference type="GO" id="GO:0005576">
    <property type="term" value="C:extracellular region"/>
    <property type="evidence" value="ECO:0000304"/>
    <property type="project" value="Reactome"/>
</dbReference>
<dbReference type="GO" id="GO:0001650">
    <property type="term" value="C:fibrillar center"/>
    <property type="evidence" value="ECO:0000314"/>
    <property type="project" value="HPA"/>
</dbReference>
<dbReference type="GO" id="GO:1904813">
    <property type="term" value="C:ficolin-1-rich granule lumen"/>
    <property type="evidence" value="ECO:0000304"/>
    <property type="project" value="Reactome"/>
</dbReference>
<dbReference type="GO" id="GO:0005654">
    <property type="term" value="C:nucleoplasm"/>
    <property type="evidence" value="ECO:0000314"/>
    <property type="project" value="HPA"/>
</dbReference>
<dbReference type="GO" id="GO:0005634">
    <property type="term" value="C:nucleus"/>
    <property type="evidence" value="ECO:0000314"/>
    <property type="project" value="UniProtKB"/>
</dbReference>
<dbReference type="GO" id="GO:0016605">
    <property type="term" value="C:PML body"/>
    <property type="evidence" value="ECO:0000314"/>
    <property type="project" value="UniProt"/>
</dbReference>
<dbReference type="GO" id="GO:0005956">
    <property type="term" value="C:protein kinase CK2 complex"/>
    <property type="evidence" value="ECO:0000314"/>
    <property type="project" value="CAFA"/>
</dbReference>
<dbReference type="GO" id="GO:0034774">
    <property type="term" value="C:secretory granule lumen"/>
    <property type="evidence" value="ECO:0000304"/>
    <property type="project" value="Reactome"/>
</dbReference>
<dbReference type="GO" id="GO:0003682">
    <property type="term" value="F:chromatin binding"/>
    <property type="evidence" value="ECO:0000314"/>
    <property type="project" value="MGI"/>
</dbReference>
<dbReference type="GO" id="GO:0042802">
    <property type="term" value="F:identical protein binding"/>
    <property type="evidence" value="ECO:0000353"/>
    <property type="project" value="IntAct"/>
</dbReference>
<dbReference type="GO" id="GO:0046872">
    <property type="term" value="F:metal ion binding"/>
    <property type="evidence" value="ECO:0007669"/>
    <property type="project" value="UniProtKB-KW"/>
</dbReference>
<dbReference type="GO" id="GO:0019904">
    <property type="term" value="F:protein domain specific binding"/>
    <property type="evidence" value="ECO:0000353"/>
    <property type="project" value="UniProtKB"/>
</dbReference>
<dbReference type="GO" id="GO:0019887">
    <property type="term" value="F:protein kinase regulator activity"/>
    <property type="evidence" value="ECO:0000318"/>
    <property type="project" value="GO_Central"/>
</dbReference>
<dbReference type="GO" id="GO:0004674">
    <property type="term" value="F:protein serine/threonine kinase activity"/>
    <property type="evidence" value="ECO:0000314"/>
    <property type="project" value="CAFA"/>
</dbReference>
<dbReference type="GO" id="GO:0030674">
    <property type="term" value="F:protein-macromolecule adaptor activity"/>
    <property type="evidence" value="ECO:0000314"/>
    <property type="project" value="UniProt"/>
</dbReference>
<dbReference type="GO" id="GO:0061629">
    <property type="term" value="F:RNA polymerase II-specific DNA-binding transcription factor binding"/>
    <property type="evidence" value="ECO:0000353"/>
    <property type="project" value="BHF-UCL"/>
</dbReference>
<dbReference type="GO" id="GO:0005102">
    <property type="term" value="F:signaling receptor binding"/>
    <property type="evidence" value="ECO:0000353"/>
    <property type="project" value="BHF-UCL"/>
</dbReference>
<dbReference type="GO" id="GO:0033211">
    <property type="term" value="P:adiponectin-activated signaling pathway"/>
    <property type="evidence" value="ECO:0000314"/>
    <property type="project" value="BHF-UCL"/>
</dbReference>
<dbReference type="GO" id="GO:0061154">
    <property type="term" value="P:endothelial tube morphogenesis"/>
    <property type="evidence" value="ECO:0000315"/>
    <property type="project" value="BHF-UCL"/>
</dbReference>
<dbReference type="GO" id="GO:0043537">
    <property type="term" value="P:negative regulation of blood vessel endothelial cell migration"/>
    <property type="evidence" value="ECO:0000314"/>
    <property type="project" value="BHF-UCL"/>
</dbReference>
<dbReference type="GO" id="GO:0008285">
    <property type="term" value="P:negative regulation of cell population proliferation"/>
    <property type="evidence" value="ECO:0000304"/>
    <property type="project" value="BHF-UCL"/>
</dbReference>
<dbReference type="GO" id="GO:0032435">
    <property type="term" value="P:negative regulation of proteasomal ubiquitin-dependent protein catabolic process"/>
    <property type="evidence" value="ECO:0000314"/>
    <property type="project" value="ARUK-UCL"/>
</dbReference>
<dbReference type="GO" id="GO:1903901">
    <property type="term" value="P:negative regulation of viral life cycle"/>
    <property type="evidence" value="ECO:0000314"/>
    <property type="project" value="UniProt"/>
</dbReference>
<dbReference type="GO" id="GO:0018107">
    <property type="term" value="P:peptidyl-threonine phosphorylation"/>
    <property type="evidence" value="ECO:0000314"/>
    <property type="project" value="CAFA"/>
</dbReference>
<dbReference type="GO" id="GO:0032927">
    <property type="term" value="P:positive regulation of activin receptor signaling pathway"/>
    <property type="evidence" value="ECO:0000315"/>
    <property type="project" value="BHF-UCL"/>
</dbReference>
<dbReference type="GO" id="GO:0060391">
    <property type="term" value="P:positive regulation of SMAD protein signal transduction"/>
    <property type="evidence" value="ECO:0000314"/>
    <property type="project" value="BHF-UCL"/>
</dbReference>
<dbReference type="GO" id="GO:0065003">
    <property type="term" value="P:protein-containing complex assembly"/>
    <property type="evidence" value="ECO:0000303"/>
    <property type="project" value="BHF-UCL"/>
</dbReference>
<dbReference type="GO" id="GO:0051101">
    <property type="term" value="P:regulation of DNA binding"/>
    <property type="evidence" value="ECO:0000303"/>
    <property type="project" value="BHF-UCL"/>
</dbReference>
<dbReference type="GO" id="GO:0007165">
    <property type="term" value="P:signal transduction"/>
    <property type="evidence" value="ECO:0000304"/>
    <property type="project" value="UniProtKB"/>
</dbReference>
<dbReference type="GO" id="GO:0075342">
    <property type="term" value="P:symbiont-mediated disruption of host cell PML body"/>
    <property type="evidence" value="ECO:0000314"/>
    <property type="project" value="UniProt"/>
</dbReference>
<dbReference type="GO" id="GO:0016055">
    <property type="term" value="P:Wnt signaling pathway"/>
    <property type="evidence" value="ECO:0007669"/>
    <property type="project" value="UniProtKB-KW"/>
</dbReference>
<dbReference type="FunFam" id="1.10.1820.10:FF:000001">
    <property type="entry name" value="Casein kinase II subunit beta"/>
    <property type="match status" value="1"/>
</dbReference>
<dbReference type="FunFam" id="2.20.25.20:FF:000002">
    <property type="entry name" value="Casein kinase II subunit beta"/>
    <property type="match status" value="1"/>
</dbReference>
<dbReference type="Gene3D" id="2.20.25.20">
    <property type="match status" value="1"/>
</dbReference>
<dbReference type="Gene3D" id="1.10.1820.10">
    <property type="entry name" value="protein kinase ck2 holoenzyme, chain C, domain 1"/>
    <property type="match status" value="1"/>
</dbReference>
<dbReference type="InterPro" id="IPR016149">
    <property type="entry name" value="Casein_kin_II_reg-sub_N"/>
</dbReference>
<dbReference type="InterPro" id="IPR035991">
    <property type="entry name" value="Casein_kinase_II_beta-like"/>
</dbReference>
<dbReference type="InterPro" id="IPR000704">
    <property type="entry name" value="Casein_kinase_II_reg-sub"/>
</dbReference>
<dbReference type="PANTHER" id="PTHR11740">
    <property type="entry name" value="CASEIN KINASE II SUBUNIT BETA"/>
    <property type="match status" value="1"/>
</dbReference>
<dbReference type="PANTHER" id="PTHR11740:SF0">
    <property type="entry name" value="CASEIN KINASE II SUBUNIT BETA"/>
    <property type="match status" value="1"/>
</dbReference>
<dbReference type="Pfam" id="PF01214">
    <property type="entry name" value="CK_II_beta"/>
    <property type="match status" value="1"/>
</dbReference>
<dbReference type="PRINTS" id="PR00472">
    <property type="entry name" value="CASNKINASEII"/>
</dbReference>
<dbReference type="SMART" id="SM01085">
    <property type="entry name" value="CK_II_beta"/>
    <property type="match status" value="1"/>
</dbReference>
<dbReference type="SUPFAM" id="SSF57798">
    <property type="entry name" value="Casein kinase II beta subunit"/>
    <property type="match status" value="1"/>
</dbReference>
<dbReference type="PROSITE" id="PS01101">
    <property type="entry name" value="CK2_BETA"/>
    <property type="match status" value="1"/>
</dbReference>
<reference key="1">
    <citation type="journal article" date="1989" name="Eur. J. Biochem.">
        <title>Human phosvitin/casein kinase type II. Molecular cloning and sequencing of full-length cDNA encoding subunit beta.</title>
        <authorList>
            <person name="Jakobi R."/>
            <person name="Voss H."/>
            <person name="Pyerin W."/>
        </authorList>
    </citation>
    <scope>NUCLEOTIDE SEQUENCE [MRNA]</scope>
</reference>
<reference key="2">
    <citation type="journal article" date="1990" name="Mutat. Res.">
        <title>Expression of the cDNA for the beta subunit of human casein kinase II confers partial UV resistance on xeroderma pigmentosum cells.</title>
        <authorList>
            <person name="Teitz T."/>
            <person name="Eli D."/>
            <person name="Penner M."/>
            <person name="Bakhanashvili M."/>
            <person name="Naiman T."/>
            <person name="Timme T.L."/>
            <person name="Wood C.M."/>
            <person name="Moses R.E."/>
            <person name="Canaani D."/>
        </authorList>
    </citation>
    <scope>NUCLEOTIDE SEQUENCE [MRNA]</scope>
</reference>
<reference key="3">
    <citation type="journal article" date="1989" name="Biochemistry">
        <title>Cloning and characterization of a cDNA encoding the beta subunit of human casein kinase II.</title>
        <authorList>
            <person name="Heller-Harrison R.A."/>
            <person name="Meisner H."/>
            <person name="Czech M.P."/>
        </authorList>
    </citation>
    <scope>NUCLEOTIDE SEQUENCE [MRNA]</scope>
</reference>
<reference key="4">
    <citation type="journal article" date="1991" name="J. Biol. Chem.">
        <title>Structure of the gene encoding human casein kinase II subunit beta.</title>
        <authorList>
            <person name="Voss A."/>
            <person name="Wirkner U."/>
            <person name="Jacobi R."/>
            <person name="Hewitt N."/>
            <person name="Schwager C."/>
            <person name="Zimmermann J."/>
            <person name="Ansorge W."/>
            <person name="Pyerin W."/>
        </authorList>
    </citation>
    <scope>NUCLEOTIDE SEQUENCE [GENOMIC DNA]</scope>
</reference>
<reference key="5">
    <citation type="journal article" date="2002" name="Biochemistry">
        <title>Sequencing of full-length cDNA encoding the alpha and beta subunits of human casein kinase II from human platelets and megakaryocytic cells. Expression of the casein kinase IIalpha intronless gene in a megakaryocytic cell line.</title>
        <authorList>
            <person name="Singh L.S."/>
            <person name="Kalafatis M."/>
        </authorList>
    </citation>
    <scope>NUCLEOTIDE SEQUENCE [MRNA]</scope>
</reference>
<reference key="6">
    <citation type="submission" date="2004-06" db="EMBL/GenBank/DDBJ databases">
        <title>Cloning of human full open reading frames in Gateway(TM) system entry vector (pDONR201).</title>
        <authorList>
            <person name="Ebert L."/>
            <person name="Schick M."/>
            <person name="Neubert P."/>
            <person name="Schatten R."/>
            <person name="Henze S."/>
            <person name="Korn B."/>
        </authorList>
    </citation>
    <scope>NUCLEOTIDE SEQUENCE [LARGE SCALE MRNA]</scope>
</reference>
<reference key="7">
    <citation type="journal article" date="2003" name="Genome Res.">
        <title>Analysis of the gene-dense major histocompatibility complex class III region and its comparison to mouse.</title>
        <authorList>
            <person name="Xie T."/>
            <person name="Rowen L."/>
            <person name="Aguado B."/>
            <person name="Ahearn M.E."/>
            <person name="Madan A."/>
            <person name="Qin S."/>
            <person name="Campbell R.D."/>
            <person name="Hood L."/>
        </authorList>
    </citation>
    <scope>NUCLEOTIDE SEQUENCE [LARGE SCALE GENOMIC DNA]</scope>
</reference>
<reference key="8">
    <citation type="submission" date="1999-09" db="EMBL/GenBank/DDBJ databases">
        <title>Homo sapiens 2,229,817bp genomic DNA of 6p21.3 HLA class I region.</title>
        <authorList>
            <person name="Shiina S."/>
            <person name="Tamiya G."/>
            <person name="Oka A."/>
            <person name="Inoko H."/>
        </authorList>
    </citation>
    <scope>NUCLEOTIDE SEQUENCE [LARGE SCALE GENOMIC DNA]</scope>
</reference>
<reference key="9">
    <citation type="journal article" date="2004" name="Nat. Genet.">
        <title>Complete sequencing and characterization of 21,243 full-length human cDNAs.</title>
        <authorList>
            <person name="Ota T."/>
            <person name="Suzuki Y."/>
            <person name="Nishikawa T."/>
            <person name="Otsuki T."/>
            <person name="Sugiyama T."/>
            <person name="Irie R."/>
            <person name="Wakamatsu A."/>
            <person name="Hayashi K."/>
            <person name="Sato H."/>
            <person name="Nagai K."/>
            <person name="Kimura K."/>
            <person name="Makita H."/>
            <person name="Sekine M."/>
            <person name="Obayashi M."/>
            <person name="Nishi T."/>
            <person name="Shibahara T."/>
            <person name="Tanaka T."/>
            <person name="Ishii S."/>
            <person name="Yamamoto J."/>
            <person name="Saito K."/>
            <person name="Kawai Y."/>
            <person name="Isono Y."/>
            <person name="Nakamura Y."/>
            <person name="Nagahari K."/>
            <person name="Murakami K."/>
            <person name="Yasuda T."/>
            <person name="Iwayanagi T."/>
            <person name="Wagatsuma M."/>
            <person name="Shiratori A."/>
            <person name="Sudo H."/>
            <person name="Hosoiri T."/>
            <person name="Kaku Y."/>
            <person name="Kodaira H."/>
            <person name="Kondo H."/>
            <person name="Sugawara M."/>
            <person name="Takahashi M."/>
            <person name="Kanda K."/>
            <person name="Yokoi T."/>
            <person name="Furuya T."/>
            <person name="Kikkawa E."/>
            <person name="Omura Y."/>
            <person name="Abe K."/>
            <person name="Kamihara K."/>
            <person name="Katsuta N."/>
            <person name="Sato K."/>
            <person name="Tanikawa M."/>
            <person name="Yamazaki M."/>
            <person name="Ninomiya K."/>
            <person name="Ishibashi T."/>
            <person name="Yamashita H."/>
            <person name="Murakawa K."/>
            <person name="Fujimori K."/>
            <person name="Tanai H."/>
            <person name="Kimata M."/>
            <person name="Watanabe M."/>
            <person name="Hiraoka S."/>
            <person name="Chiba Y."/>
            <person name="Ishida S."/>
            <person name="Ono Y."/>
            <person name="Takiguchi S."/>
            <person name="Watanabe S."/>
            <person name="Yosida M."/>
            <person name="Hotuta T."/>
            <person name="Kusano J."/>
            <person name="Kanehori K."/>
            <person name="Takahashi-Fujii A."/>
            <person name="Hara H."/>
            <person name="Tanase T.-O."/>
            <person name="Nomura Y."/>
            <person name="Togiya S."/>
            <person name="Komai F."/>
            <person name="Hara R."/>
            <person name="Takeuchi K."/>
            <person name="Arita M."/>
            <person name="Imose N."/>
            <person name="Musashino K."/>
            <person name="Yuuki H."/>
            <person name="Oshima A."/>
            <person name="Sasaki N."/>
            <person name="Aotsuka S."/>
            <person name="Yoshikawa Y."/>
            <person name="Matsunawa H."/>
            <person name="Ichihara T."/>
            <person name="Shiohata N."/>
            <person name="Sano S."/>
            <person name="Moriya S."/>
            <person name="Momiyama H."/>
            <person name="Satoh N."/>
            <person name="Takami S."/>
            <person name="Terashima Y."/>
            <person name="Suzuki O."/>
            <person name="Nakagawa S."/>
            <person name="Senoh A."/>
            <person name="Mizoguchi H."/>
            <person name="Goto Y."/>
            <person name="Shimizu F."/>
            <person name="Wakebe H."/>
            <person name="Hishigaki H."/>
            <person name="Watanabe T."/>
            <person name="Sugiyama A."/>
            <person name="Takemoto M."/>
            <person name="Kawakami B."/>
            <person name="Yamazaki M."/>
            <person name="Watanabe K."/>
            <person name="Kumagai A."/>
            <person name="Itakura S."/>
            <person name="Fukuzumi Y."/>
            <person name="Fujimori Y."/>
            <person name="Komiyama M."/>
            <person name="Tashiro H."/>
            <person name="Tanigami A."/>
            <person name="Fujiwara T."/>
            <person name="Ono T."/>
            <person name="Yamada K."/>
            <person name="Fujii Y."/>
            <person name="Ozaki K."/>
            <person name="Hirao M."/>
            <person name="Ohmori Y."/>
            <person name="Kawabata A."/>
            <person name="Hikiji T."/>
            <person name="Kobatake N."/>
            <person name="Inagaki H."/>
            <person name="Ikema Y."/>
            <person name="Okamoto S."/>
            <person name="Okitani R."/>
            <person name="Kawakami T."/>
            <person name="Noguchi S."/>
            <person name="Itoh T."/>
            <person name="Shigeta K."/>
            <person name="Senba T."/>
            <person name="Matsumura K."/>
            <person name="Nakajima Y."/>
            <person name="Mizuno T."/>
            <person name="Morinaga M."/>
            <person name="Sasaki M."/>
            <person name="Togashi T."/>
            <person name="Oyama M."/>
            <person name="Hata H."/>
            <person name="Watanabe M."/>
            <person name="Komatsu T."/>
            <person name="Mizushima-Sugano J."/>
            <person name="Satoh T."/>
            <person name="Shirai Y."/>
            <person name="Takahashi Y."/>
            <person name="Nakagawa K."/>
            <person name="Okumura K."/>
            <person name="Nagase T."/>
            <person name="Nomura N."/>
            <person name="Kikuchi H."/>
            <person name="Masuho Y."/>
            <person name="Yamashita R."/>
            <person name="Nakai K."/>
            <person name="Yada T."/>
            <person name="Nakamura Y."/>
            <person name="Ohara O."/>
            <person name="Isogai T."/>
            <person name="Sugano S."/>
        </authorList>
    </citation>
    <scope>NUCLEOTIDE SEQUENCE [LARGE SCALE MRNA]</scope>
    <source>
        <tissue>Brain</tissue>
    </source>
</reference>
<reference key="10">
    <citation type="submission" date="2005-12" db="EMBL/GenBank/DDBJ databases">
        <authorList>
            <consortium name="NHLBI resequencing and genotyping service (RS&amp;G)"/>
        </authorList>
    </citation>
    <scope>NUCLEOTIDE SEQUENCE [GENOMIC DNA]</scope>
</reference>
<reference key="11">
    <citation type="journal article" date="2003" name="Nature">
        <title>The DNA sequence and analysis of human chromosome 6.</title>
        <authorList>
            <person name="Mungall A.J."/>
            <person name="Palmer S.A."/>
            <person name="Sims S.K."/>
            <person name="Edwards C.A."/>
            <person name="Ashurst J.L."/>
            <person name="Wilming L."/>
            <person name="Jones M.C."/>
            <person name="Horton R."/>
            <person name="Hunt S.E."/>
            <person name="Scott C.E."/>
            <person name="Gilbert J.G.R."/>
            <person name="Clamp M.E."/>
            <person name="Bethel G."/>
            <person name="Milne S."/>
            <person name="Ainscough R."/>
            <person name="Almeida J.P."/>
            <person name="Ambrose K.D."/>
            <person name="Andrews T.D."/>
            <person name="Ashwell R.I.S."/>
            <person name="Babbage A.K."/>
            <person name="Bagguley C.L."/>
            <person name="Bailey J."/>
            <person name="Banerjee R."/>
            <person name="Barker D.J."/>
            <person name="Barlow K.F."/>
            <person name="Bates K."/>
            <person name="Beare D.M."/>
            <person name="Beasley H."/>
            <person name="Beasley O."/>
            <person name="Bird C.P."/>
            <person name="Blakey S.E."/>
            <person name="Bray-Allen S."/>
            <person name="Brook J."/>
            <person name="Brown A.J."/>
            <person name="Brown J.Y."/>
            <person name="Burford D.C."/>
            <person name="Burrill W."/>
            <person name="Burton J."/>
            <person name="Carder C."/>
            <person name="Carter N.P."/>
            <person name="Chapman J.C."/>
            <person name="Clark S.Y."/>
            <person name="Clark G."/>
            <person name="Clee C.M."/>
            <person name="Clegg S."/>
            <person name="Cobley V."/>
            <person name="Collier R.E."/>
            <person name="Collins J.E."/>
            <person name="Colman L.K."/>
            <person name="Corby N.R."/>
            <person name="Coville G.J."/>
            <person name="Culley K.M."/>
            <person name="Dhami P."/>
            <person name="Davies J."/>
            <person name="Dunn M."/>
            <person name="Earthrowl M.E."/>
            <person name="Ellington A.E."/>
            <person name="Evans K.A."/>
            <person name="Faulkner L."/>
            <person name="Francis M.D."/>
            <person name="Frankish A."/>
            <person name="Frankland J."/>
            <person name="French L."/>
            <person name="Garner P."/>
            <person name="Garnett J."/>
            <person name="Ghori M.J."/>
            <person name="Gilby L.M."/>
            <person name="Gillson C.J."/>
            <person name="Glithero R.J."/>
            <person name="Grafham D.V."/>
            <person name="Grant M."/>
            <person name="Gribble S."/>
            <person name="Griffiths C."/>
            <person name="Griffiths M.N.D."/>
            <person name="Hall R."/>
            <person name="Halls K.S."/>
            <person name="Hammond S."/>
            <person name="Harley J.L."/>
            <person name="Hart E.A."/>
            <person name="Heath P.D."/>
            <person name="Heathcott R."/>
            <person name="Holmes S.J."/>
            <person name="Howden P.J."/>
            <person name="Howe K.L."/>
            <person name="Howell G.R."/>
            <person name="Huckle E."/>
            <person name="Humphray S.J."/>
            <person name="Humphries M.D."/>
            <person name="Hunt A.R."/>
            <person name="Johnson C.M."/>
            <person name="Joy A.A."/>
            <person name="Kay M."/>
            <person name="Keenan S.J."/>
            <person name="Kimberley A.M."/>
            <person name="King A."/>
            <person name="Laird G.K."/>
            <person name="Langford C."/>
            <person name="Lawlor S."/>
            <person name="Leongamornlert D.A."/>
            <person name="Leversha M."/>
            <person name="Lloyd C.R."/>
            <person name="Lloyd D.M."/>
            <person name="Loveland J.E."/>
            <person name="Lovell J."/>
            <person name="Martin S."/>
            <person name="Mashreghi-Mohammadi M."/>
            <person name="Maslen G.L."/>
            <person name="Matthews L."/>
            <person name="McCann O.T."/>
            <person name="McLaren S.J."/>
            <person name="McLay K."/>
            <person name="McMurray A."/>
            <person name="Moore M.J.F."/>
            <person name="Mullikin J.C."/>
            <person name="Niblett D."/>
            <person name="Nickerson T."/>
            <person name="Novik K.L."/>
            <person name="Oliver K."/>
            <person name="Overton-Larty E.K."/>
            <person name="Parker A."/>
            <person name="Patel R."/>
            <person name="Pearce A.V."/>
            <person name="Peck A.I."/>
            <person name="Phillimore B.J.C.T."/>
            <person name="Phillips S."/>
            <person name="Plumb R.W."/>
            <person name="Porter K.M."/>
            <person name="Ramsey Y."/>
            <person name="Ranby S.A."/>
            <person name="Rice C.M."/>
            <person name="Ross M.T."/>
            <person name="Searle S.M."/>
            <person name="Sehra H.K."/>
            <person name="Sheridan E."/>
            <person name="Skuce C.D."/>
            <person name="Smith S."/>
            <person name="Smith M."/>
            <person name="Spraggon L."/>
            <person name="Squares S.L."/>
            <person name="Steward C.A."/>
            <person name="Sycamore N."/>
            <person name="Tamlyn-Hall G."/>
            <person name="Tester J."/>
            <person name="Theaker A.J."/>
            <person name="Thomas D.W."/>
            <person name="Thorpe A."/>
            <person name="Tracey A."/>
            <person name="Tromans A."/>
            <person name="Tubby B."/>
            <person name="Wall M."/>
            <person name="Wallis J.M."/>
            <person name="West A.P."/>
            <person name="White S.S."/>
            <person name="Whitehead S.L."/>
            <person name="Whittaker H."/>
            <person name="Wild A."/>
            <person name="Willey D.J."/>
            <person name="Wilmer T.E."/>
            <person name="Wood J.M."/>
            <person name="Wray P.W."/>
            <person name="Wyatt J.C."/>
            <person name="Young L."/>
            <person name="Younger R.M."/>
            <person name="Bentley D.R."/>
            <person name="Coulson A."/>
            <person name="Durbin R.M."/>
            <person name="Hubbard T."/>
            <person name="Sulston J.E."/>
            <person name="Dunham I."/>
            <person name="Rogers J."/>
            <person name="Beck S."/>
        </authorList>
    </citation>
    <scope>NUCLEOTIDE SEQUENCE [LARGE SCALE GENOMIC DNA]</scope>
</reference>
<reference key="12">
    <citation type="submission" date="2005-07" db="EMBL/GenBank/DDBJ databases">
        <authorList>
            <person name="Mural R.J."/>
            <person name="Istrail S."/>
            <person name="Sutton G."/>
            <person name="Florea L."/>
            <person name="Halpern A.L."/>
            <person name="Mobarry C.M."/>
            <person name="Lippert R."/>
            <person name="Walenz B."/>
            <person name="Shatkay H."/>
            <person name="Dew I."/>
            <person name="Miller J.R."/>
            <person name="Flanigan M.J."/>
            <person name="Edwards N.J."/>
            <person name="Bolanos R."/>
            <person name="Fasulo D."/>
            <person name="Halldorsson B.V."/>
            <person name="Hannenhalli S."/>
            <person name="Turner R."/>
            <person name="Yooseph S."/>
            <person name="Lu F."/>
            <person name="Nusskern D.R."/>
            <person name="Shue B.C."/>
            <person name="Zheng X.H."/>
            <person name="Zhong F."/>
            <person name="Delcher A.L."/>
            <person name="Huson D.H."/>
            <person name="Kravitz S.A."/>
            <person name="Mouchard L."/>
            <person name="Reinert K."/>
            <person name="Remington K.A."/>
            <person name="Clark A.G."/>
            <person name="Waterman M.S."/>
            <person name="Eichler E.E."/>
            <person name="Adams M.D."/>
            <person name="Hunkapiller M.W."/>
            <person name="Myers E.W."/>
            <person name="Venter J.C."/>
        </authorList>
    </citation>
    <scope>NUCLEOTIDE SEQUENCE [LARGE SCALE GENOMIC DNA]</scope>
</reference>
<reference key="13">
    <citation type="journal article" date="2004" name="Genome Res.">
        <title>The status, quality, and expansion of the NIH full-length cDNA project: the Mammalian Gene Collection (MGC).</title>
        <authorList>
            <consortium name="The MGC Project Team"/>
        </authorList>
    </citation>
    <scope>NUCLEOTIDE SEQUENCE [LARGE SCALE MRNA]</scope>
    <source>
        <tissue>Brain</tissue>
    </source>
</reference>
<reference key="14">
    <citation type="journal article" date="1990" name="Proc. Natl. Acad. Sci. U.S.A.">
        <title>Stimulation of casein kinase II by epidermal growth factor: relationship between the physiological activity of the kinase and the phosphorylation state of its beta subunit.</title>
        <authorList>
            <person name="Ackerman P."/>
            <person name="Glover C.V."/>
            <person name="Osheroff N."/>
        </authorList>
    </citation>
    <scope>PHOSPHORYLATION</scope>
</reference>
<reference key="15">
    <citation type="journal article" date="2001" name="Eur. J. Immunol.">
        <title>Interaction of CD163 with the regulatory subunit of casein kinase II (CKII) and dependence of CD163 signaling on CKII and protein kinase C.</title>
        <authorList>
            <person name="Ritter M."/>
            <person name="Buechler C."/>
            <person name="Kapinsky M."/>
            <person name="Schmitz G."/>
        </authorList>
    </citation>
    <scope>INTERACTION WITH CD163</scope>
</reference>
<reference key="16">
    <citation type="journal article" date="2001" name="Mol. Cell">
        <title>A DNA damage-induced p53 serine 392 kinase complex contains CK2, hSpt16, and SSRP1.</title>
        <authorList>
            <person name="Keller D.M."/>
            <person name="Zeng X."/>
            <person name="Wang Y."/>
            <person name="Zhang Q.H."/>
            <person name="Kapoor M."/>
            <person name="Shu H."/>
            <person name="Goodman R."/>
            <person name="Lozano G."/>
            <person name="Zhao Y."/>
            <person name="Lu H."/>
        </authorList>
    </citation>
    <scope>FUNCTION</scope>
    <scope>INTERACTION WITH SSRP1 AND SUPT16H</scope>
</reference>
<reference key="17">
    <citation type="journal article" date="2002" name="J. Biol. Chem.">
        <title>Identification of ribosome-binding protein p34 as an intracellular protein that binds acidic fibroblast growth factor.</title>
        <authorList>
            <person name="Skjerpen C.S."/>
            <person name="Wesche J."/>
            <person name="Olsnes S."/>
        </authorList>
    </citation>
    <scope>INTERACTION WITH FGF1</scope>
</reference>
<reference key="18">
    <citation type="journal article" date="2002" name="J. Biol. Chem.">
        <title>p53 serine 392 phosphorylation increases after UV through induction of the assembly of the CK2.hSPT16.SSRP1 complex.</title>
        <authorList>
            <person name="Keller D.M."/>
            <person name="Lu H."/>
        </authorList>
    </citation>
    <scope>INTERACTION WITH SSRP1 AND SUPT16H</scope>
</reference>
<reference key="19">
    <citation type="journal article" date="2006" name="Cell">
        <title>Global, in vivo, and site-specific phosphorylation dynamics in signaling networks.</title>
        <authorList>
            <person name="Olsen J.V."/>
            <person name="Blagoev B."/>
            <person name="Gnad F."/>
            <person name="Macek B."/>
            <person name="Kumar C."/>
            <person name="Mortensen P."/>
            <person name="Mann M."/>
        </authorList>
    </citation>
    <scope>IDENTIFICATION BY MASS SPECTROMETRY [LARGE SCALE ANALYSIS]</scope>
    <source>
        <tissue>Cervix carcinoma</tissue>
    </source>
</reference>
<reference key="20">
    <citation type="journal article" date="2006" name="Genes Dev.">
        <title>Casein kinase 2-dependent serine phosphorylation of MuSK regulates acetylcholine receptor aggregation at the neuromuscular junction.</title>
        <authorList>
            <person name="Cheusova T."/>
            <person name="Khan M.A."/>
            <person name="Schubert S.W."/>
            <person name="Gavin A.C."/>
            <person name="Buchou T."/>
            <person name="Jacob G."/>
            <person name="Sticht H."/>
            <person name="Allende J."/>
            <person name="Boldyreff B."/>
            <person name="Brenner H.R."/>
            <person name="Hashemolhosseini S."/>
        </authorList>
    </citation>
    <scope>FUNCTION IN PHOSPHORYLATION OF MUSK</scope>
    <scope>INTERACTION WITH MUSK</scope>
</reference>
<reference key="21">
    <citation type="journal article" date="2008" name="Mol. Cell">
        <title>Kinase-selective enrichment enables quantitative phosphoproteomics of the kinome across the cell cycle.</title>
        <authorList>
            <person name="Daub H."/>
            <person name="Olsen J.V."/>
            <person name="Bairlein M."/>
            <person name="Gnad F."/>
            <person name="Oppermann F.S."/>
            <person name="Korner R."/>
            <person name="Greff Z."/>
            <person name="Keri G."/>
            <person name="Stemmann O."/>
            <person name="Mann M."/>
        </authorList>
    </citation>
    <scope>PHOSPHORYLATION [LARGE SCALE ANALYSIS] AT SER-8; SER-69 AND SER-209</scope>
    <scope>IDENTIFICATION BY MASS SPECTROMETRY [LARGE SCALE ANALYSIS]</scope>
    <source>
        <tissue>Cervix carcinoma</tissue>
    </source>
</reference>
<reference key="22">
    <citation type="journal article" date="2008" name="Proc. Natl. Acad. Sci. U.S.A.">
        <title>A quantitative atlas of mitotic phosphorylation.</title>
        <authorList>
            <person name="Dephoure N."/>
            <person name="Zhou C."/>
            <person name="Villen J."/>
            <person name="Beausoleil S.A."/>
            <person name="Bakalarski C.E."/>
            <person name="Elledge S.J."/>
            <person name="Gygi S.P."/>
        </authorList>
    </citation>
    <scope>IDENTIFICATION BY MASS SPECTROMETRY [LARGE SCALE ANALYSIS]</scope>
    <source>
        <tissue>Cervix carcinoma</tissue>
    </source>
</reference>
<reference key="23">
    <citation type="journal article" date="2009" name="Mol. Cell. Proteomics">
        <title>Large-scale proteomics analysis of the human kinome.</title>
        <authorList>
            <person name="Oppermann F.S."/>
            <person name="Gnad F."/>
            <person name="Olsen J.V."/>
            <person name="Hornberger R."/>
            <person name="Greff Z."/>
            <person name="Keri G."/>
            <person name="Mann M."/>
            <person name="Daub H."/>
        </authorList>
    </citation>
    <scope>ACETYLATION [LARGE SCALE ANALYSIS] AT SER-2</scope>
    <scope>PHOSPHORYLATION [LARGE SCALE ANALYSIS] AT SER-209</scope>
    <scope>CLEAVAGE OF INITIATOR METHIONINE [LARGE SCALE ANALYSIS]</scope>
    <scope>IDENTIFICATION BY MASS SPECTROMETRY [LARGE SCALE ANALYSIS]</scope>
</reference>
<reference key="24">
    <citation type="journal article" date="2009" name="Science">
        <title>Lysine acetylation targets protein complexes and co-regulates major cellular functions.</title>
        <authorList>
            <person name="Choudhary C."/>
            <person name="Kumar C."/>
            <person name="Gnad F."/>
            <person name="Nielsen M.L."/>
            <person name="Rehman M."/>
            <person name="Walther T.C."/>
            <person name="Olsen J.V."/>
            <person name="Mann M."/>
        </authorList>
    </citation>
    <scope>ACETYLATION [LARGE SCALE ANALYSIS] AT LYS-212</scope>
    <scope>IDENTIFICATION BY MASS SPECTROMETRY [LARGE SCALE ANALYSIS]</scope>
</reference>
<reference key="25">
    <citation type="journal article" date="2010" name="J. Virol.">
        <title>Epstein-Barr virus nuclear antigen 1 Hijacks the host kinase CK2 to disrupt PML nuclear bodies.</title>
        <authorList>
            <person name="Sivachandran N."/>
            <person name="Cao J.Y."/>
            <person name="Frappier L."/>
        </authorList>
    </citation>
    <scope>FUNCTION (MICROBIAL INFECTION)</scope>
    <scope>INTERACTION WITH EPSTEIN-BARR VIRUS EBNA1 (MICROBIAL INFECTION)</scope>
</reference>
<reference key="26">
    <citation type="journal article" date="2010" name="Sci. Signal.">
        <title>Quantitative phosphoproteomics reveals widespread full phosphorylation site occupancy during mitosis.</title>
        <authorList>
            <person name="Olsen J.V."/>
            <person name="Vermeulen M."/>
            <person name="Santamaria A."/>
            <person name="Kumar C."/>
            <person name="Miller M.L."/>
            <person name="Jensen L.J."/>
            <person name="Gnad F."/>
            <person name="Cox J."/>
            <person name="Jensen T.S."/>
            <person name="Nigg E.A."/>
            <person name="Brunak S."/>
            <person name="Mann M."/>
        </authorList>
    </citation>
    <scope>ACETYLATION [LARGE SCALE ANALYSIS] AT SER-2</scope>
    <scope>PHOSPHORYLATION [LARGE SCALE ANALYSIS] AT SER-209</scope>
    <scope>CLEAVAGE OF INITIATOR METHIONINE [LARGE SCALE ANALYSIS]</scope>
    <scope>IDENTIFICATION BY MASS SPECTROMETRY [LARGE SCALE ANALYSIS]</scope>
    <source>
        <tissue>Cervix carcinoma</tissue>
    </source>
</reference>
<reference key="27">
    <citation type="journal article" date="2011" name="BMC Syst. Biol.">
        <title>Initial characterization of the human central proteome.</title>
        <authorList>
            <person name="Burkard T.R."/>
            <person name="Planyavsky M."/>
            <person name="Kaupe I."/>
            <person name="Breitwieser F.P."/>
            <person name="Buerckstuemmer T."/>
            <person name="Bennett K.L."/>
            <person name="Superti-Furga G."/>
            <person name="Colinge J."/>
        </authorList>
    </citation>
    <scope>IDENTIFICATION BY MASS SPECTROMETRY [LARGE SCALE ANALYSIS]</scope>
</reference>
<reference key="28">
    <citation type="journal article" date="2011" name="Sci. Signal.">
        <title>System-wide temporal characterization of the proteome and phosphoproteome of human embryonic stem cell differentiation.</title>
        <authorList>
            <person name="Rigbolt K.T."/>
            <person name="Prokhorova T.A."/>
            <person name="Akimov V."/>
            <person name="Henningsen J."/>
            <person name="Johansen P.T."/>
            <person name="Kratchmarova I."/>
            <person name="Kassem M."/>
            <person name="Mann M."/>
            <person name="Olsen J.V."/>
            <person name="Blagoev B."/>
        </authorList>
    </citation>
    <scope>ACETYLATION [LARGE SCALE ANALYSIS] AT SER-2</scope>
    <scope>PHOSPHORYLATION [LARGE SCALE ANALYSIS] AT SER-209</scope>
    <scope>CLEAVAGE OF INITIATOR METHIONINE [LARGE SCALE ANALYSIS]</scope>
    <scope>IDENTIFICATION BY MASS SPECTROMETRY [LARGE SCALE ANALYSIS]</scope>
</reference>
<reference key="29">
    <citation type="journal article" date="2013" name="J. Proteome Res.">
        <title>Toward a comprehensive characterization of a human cancer cell phosphoproteome.</title>
        <authorList>
            <person name="Zhou H."/>
            <person name="Di Palma S."/>
            <person name="Preisinger C."/>
            <person name="Peng M."/>
            <person name="Polat A.N."/>
            <person name="Heck A.J."/>
            <person name="Mohammed S."/>
        </authorList>
    </citation>
    <scope>PHOSPHORYLATION [LARGE SCALE ANALYSIS] AT THR-37 AND SER-209</scope>
    <scope>IDENTIFICATION BY MASS SPECTROMETRY [LARGE SCALE ANALYSIS]</scope>
    <source>
        <tissue>Cervix carcinoma</tissue>
        <tissue>Erythroleukemia</tissue>
    </source>
</reference>
<reference key="30">
    <citation type="journal article" date="2014" name="J. Proteomics">
        <title>An enzyme assisted RP-RPLC approach for in-depth analysis of human liver phosphoproteome.</title>
        <authorList>
            <person name="Bian Y."/>
            <person name="Song C."/>
            <person name="Cheng K."/>
            <person name="Dong M."/>
            <person name="Wang F."/>
            <person name="Huang J."/>
            <person name="Sun D."/>
            <person name="Wang L."/>
            <person name="Ye M."/>
            <person name="Zou H."/>
        </authorList>
    </citation>
    <scope>IDENTIFICATION BY MASS SPECTROMETRY [LARGE SCALE ANALYSIS]</scope>
    <source>
        <tissue>Liver</tissue>
    </source>
</reference>
<reference key="31">
    <citation type="journal article" date="2014" name="Mol. Cell. Biol.">
        <title>Identification of a novel protein interaction motif in the regulatory subunit of casein kinase 2.</title>
        <authorList>
            <person name="Cao J.Y."/>
            <person name="Shire K."/>
            <person name="Landry C."/>
            <person name="Gish G.D."/>
            <person name="Pawson T."/>
            <person name="Frappier L."/>
        </authorList>
    </citation>
    <scope>INTERACTION WITH ARK2N</scope>
    <scope>INTERACTION WITH EPSTEIN-BARR VIRUS EBNA1 (MICROBIAL INFECTION)</scope>
    <scope>MUTAGENESIS OF 147-LYS--ARG-150</scope>
</reference>
<reference key="32">
    <citation type="journal article" date="2015" name="Mol. Cell. Proteomics">
        <title>System-wide analysis of SUMOylation dynamics in response to replication stress reveals novel small ubiquitin-like modified target proteins and acceptor lysines relevant for genome stability.</title>
        <authorList>
            <person name="Xiao Z."/>
            <person name="Chang J.G."/>
            <person name="Hendriks I.A."/>
            <person name="Sigurdsson J.O."/>
            <person name="Olsen J.V."/>
            <person name="Vertegaal A.C."/>
        </authorList>
    </citation>
    <scope>SUMOYLATION [LARGE SCALE ANALYSIS] AT LYS-212</scope>
    <scope>IDENTIFICATION BY MASS SPECTROMETRY [LARGE SCALE ANALYSIS]</scope>
</reference>
<reference key="33">
    <citation type="journal article" date="2015" name="Proteomics">
        <title>N-terminome analysis of the human mitochondrial proteome.</title>
        <authorList>
            <person name="Vaca Jacome A.S."/>
            <person name="Rabilloud T."/>
            <person name="Schaeffer-Reiss C."/>
            <person name="Rompais M."/>
            <person name="Ayoub D."/>
            <person name="Lane L."/>
            <person name="Bairoch A."/>
            <person name="Van Dorsselaer A."/>
            <person name="Carapito C."/>
        </authorList>
    </citation>
    <scope>IDENTIFICATION BY MASS SPECTROMETRY [LARGE SCALE ANALYSIS]</scope>
</reference>
<reference key="34">
    <citation type="journal article" date="2017" name="Hum. Mutat.">
        <title>CSNK2B splice site mutations in patients cause intellectual disability with or without myoclonic epilepsy.</title>
        <authorList>
            <person name="Poirier K."/>
            <person name="Hubert L."/>
            <person name="Viot G."/>
            <person name="Rio M."/>
            <person name="Billuart P."/>
            <person name="Besmond C."/>
            <person name="Bienvenu T."/>
        </authorList>
    </citation>
    <scope>INVOLVEMENT IN POBINDS</scope>
</reference>
<reference key="35">
    <citation type="journal article" date="2019" name="J. Virol.">
        <title>Identification of ARKL1 as a Negative Regulator of Epstein-Barr Virus Reactivation.</title>
        <authorList>
            <person name="Siddiqi U.Z."/>
            <person name="Vaidya A.S."/>
            <person name="Li X."/>
            <person name="Marcon E."/>
            <person name="Tsao S.W."/>
            <person name="Greenblatt J."/>
            <person name="Frappier L."/>
        </authorList>
    </citation>
    <scope>FUNCTION (MICROBIAL INFECTION)</scope>
    <scope>INTERACTION WITH JUN AND ARKN2</scope>
    <scope>SUBCELLULAR LOCATION</scope>
</reference>
<reference key="36">
    <citation type="journal article" date="2019" name="Sci. Rep.">
        <title>Germline de novo variants in CSNK2B in Chinese patients with epilepsy.</title>
        <authorList>
            <person name="Li J."/>
            <person name="Gao K."/>
            <person name="Cai S."/>
            <person name="Liu Y."/>
            <person name="Wang Y."/>
            <person name="Huang S."/>
            <person name="Zha J."/>
            <person name="Hu W."/>
            <person name="Yu S."/>
            <person name="Yang Z."/>
            <person name="Xie H."/>
            <person name="Yan H."/>
            <person name="Wang J."/>
            <person name="Wu Y."/>
            <person name="Jiang Y."/>
        </authorList>
    </citation>
    <scope>INVOLVEMENT IN POBINDS</scope>
    <scope>VARIANTS POBINDS 5-GLU--ARG-215 DEL; CYS-86; PRO-111; GLY-137; PHE-137 AND ARG-187</scope>
</reference>
<reference key="37">
    <citation type="journal article" date="1999" name="EMBO J.">
        <title>Crystal structure of the human protein kinase CK2 regulatory subunit reveals its zinc finger-mediated dimerization.</title>
        <authorList>
            <person name="Chantalat L."/>
            <person name="Leroy D."/>
            <person name="Filhol O."/>
            <person name="Nueda A."/>
            <person name="Benitez M.J."/>
            <person name="Chambaz E.M."/>
            <person name="Cochet C."/>
            <person name="Dideberg O."/>
        </authorList>
    </citation>
    <scope>X-RAY CRYSTALLOGRAPHY (1.74 ANGSTROMS) OF 1-182</scope>
    <scope>SUBUNIT</scope>
    <scope>ZINC-BINDING SITES</scope>
</reference>
<reference key="38">
    <citation type="journal article" date="2001" name="EMBO J.">
        <title>Crystal structure of human protein kinase CK2: insights into basic properties of the CK2 holoenzyme.</title>
        <authorList>
            <person name="Niefind K."/>
            <person name="Guerra B."/>
            <person name="Ermakowa I."/>
            <person name="Issinger O.G."/>
        </authorList>
    </citation>
    <scope>X-RAY CRYSTALLOGRAPHY (3.1 ANGSTROMS) IN COMPLEX WITH CSNK2A1</scope>
    <scope>ZINC-BINDING SITES</scope>
    <scope>SUBUNIT</scope>
    <scope>PHOSPHORYLATION AT SER-2 AND SER-3</scope>
</reference>
<gene>
    <name evidence="17" type="primary">CSNK2B</name>
    <name type="synonym">CK2N</name>
    <name type="synonym">G5A</name>
</gene>
<protein>
    <recommendedName>
        <fullName>Casein kinase II subunit beta</fullName>
        <shortName>CK II beta</shortName>
    </recommendedName>
    <alternativeName>
        <fullName>Phosvitin</fullName>
    </alternativeName>
    <alternativeName>
        <fullName>Protein G5a</fullName>
    </alternativeName>
</protein>
<feature type="initiator methionine" description="Removed" evidence="19 21 22">
    <location>
        <position position="1"/>
    </location>
</feature>
<feature type="chain" id="PRO_0000068236" description="Casein kinase II subunit beta">
    <location>
        <begin position="2"/>
        <end position="215"/>
    </location>
</feature>
<feature type="region of interest" description="Interaction with alpha subunit" evidence="1">
    <location>
        <begin position="188"/>
        <end position="193"/>
    </location>
</feature>
<feature type="short sequence motif" description="KSSR motif" evidence="12">
    <location>
        <begin position="147"/>
        <end position="150"/>
    </location>
</feature>
<feature type="binding site">
    <location>
        <position position="109"/>
    </location>
    <ligand>
        <name>Zn(2+)</name>
        <dbReference type="ChEBI" id="CHEBI:29105"/>
    </ligand>
</feature>
<feature type="binding site">
    <location>
        <position position="114"/>
    </location>
    <ligand>
        <name>Zn(2+)</name>
        <dbReference type="ChEBI" id="CHEBI:29105"/>
    </ligand>
</feature>
<feature type="binding site">
    <location>
        <position position="137"/>
    </location>
    <ligand>
        <name>Zn(2+)</name>
        <dbReference type="ChEBI" id="CHEBI:29105"/>
    </ligand>
</feature>
<feature type="binding site">
    <location>
        <position position="140"/>
    </location>
    <ligand>
        <name>Zn(2+)</name>
        <dbReference type="ChEBI" id="CHEBI:29105"/>
    </ligand>
</feature>
<feature type="modified residue" description="N-acetylserine" evidence="19 21 22">
    <location>
        <position position="2"/>
    </location>
</feature>
<feature type="modified residue" description="Phosphoserine; by autocatalysis" evidence="6">
    <location>
        <position position="2"/>
    </location>
</feature>
<feature type="modified residue" description="Phosphoserine; by autocatalysis" evidence="6">
    <location>
        <position position="3"/>
    </location>
</feature>
<feature type="modified residue" description="Phosphoserine" evidence="18">
    <location>
        <position position="8"/>
    </location>
</feature>
<feature type="modified residue" description="Phosphothreonine" evidence="23">
    <location>
        <position position="37"/>
    </location>
</feature>
<feature type="modified residue" description="Phosphoserine" evidence="18">
    <location>
        <position position="69"/>
    </location>
</feature>
<feature type="modified residue" description="Phosphoserine" evidence="18 19 21 22 23">
    <location>
        <position position="209"/>
    </location>
</feature>
<feature type="modified residue" description="N6-acetyllysine; alternate" evidence="20">
    <location>
        <position position="212"/>
    </location>
</feature>
<feature type="cross-link" description="Glycyl lysine isopeptide (Lys-Gly) (interchain with G-Cter in SUMO2); alternate" evidence="24">
    <location>
        <position position="212"/>
    </location>
</feature>
<feature type="sequence variant" id="VAR_083650" description="In POBINDS; associated in cis with C-86." evidence="15">
    <location>
        <begin position="5"/>
        <end position="215"/>
    </location>
</feature>
<feature type="sequence variant" id="VAR_083651" description="In POBINDS; uncertain significance; associated in cis with 5-E--R-215 del." evidence="15">
    <original>R</original>
    <variation>C</variation>
    <location>
        <position position="86"/>
    </location>
</feature>
<feature type="sequence variant" id="VAR_083652" description="In POBINDS." evidence="15">
    <original>R</original>
    <variation>P</variation>
    <location>
        <position position="111"/>
    </location>
</feature>
<feature type="sequence variant" id="VAR_083653" description="In POBINDS." evidence="15">
    <original>C</original>
    <variation>F</variation>
    <location>
        <position position="137"/>
    </location>
</feature>
<feature type="sequence variant" id="VAR_083654" description="In POBINDS." evidence="15">
    <original>C</original>
    <variation>G</variation>
    <location>
        <position position="137"/>
    </location>
</feature>
<feature type="sequence variant" id="VAR_083655" description="In POBINDS." evidence="15">
    <original>L</original>
    <variation>R</variation>
    <location>
        <position position="187"/>
    </location>
</feature>
<feature type="mutagenesis site" description="No effect on interaction alpha subunit CSNK2A1. Loss on interaction with ARK2N and Epstein-Barr virus EBNA1." evidence="12">
    <original>KSSR</original>
    <variation>AAAA</variation>
    <location>
        <begin position="147"/>
        <end position="150"/>
    </location>
</feature>
<feature type="sequence conflict" description="In Ref. 3; AAA52123." evidence="16" ref="3">
    <original>P</original>
    <variation>A</variation>
    <location>
        <position position="194"/>
    </location>
</feature>
<feature type="helix" evidence="26">
    <location>
        <begin position="9"/>
        <end position="15"/>
    </location>
</feature>
<feature type="turn" evidence="25">
    <location>
        <begin position="17"/>
        <end position="20"/>
    </location>
</feature>
<feature type="helix" evidence="26">
    <location>
        <begin position="27"/>
        <end position="31"/>
    </location>
</feature>
<feature type="helix" evidence="26">
    <location>
        <begin position="33"/>
        <end position="36"/>
    </location>
</feature>
<feature type="helix" evidence="26">
    <location>
        <begin position="39"/>
        <end position="41"/>
    </location>
</feature>
<feature type="strand" evidence="28">
    <location>
        <begin position="43"/>
        <end position="45"/>
    </location>
</feature>
<feature type="helix" evidence="26">
    <location>
        <begin position="46"/>
        <end position="53"/>
    </location>
</feature>
<feature type="strand" evidence="31">
    <location>
        <begin position="59"/>
        <end position="61"/>
    </location>
</feature>
<feature type="helix" evidence="26">
    <location>
        <begin position="67"/>
        <end position="87"/>
    </location>
</feature>
<feature type="helix" evidence="26">
    <location>
        <begin position="91"/>
        <end position="102"/>
    </location>
</feature>
<feature type="turn" evidence="26">
    <location>
        <begin position="103"/>
        <end position="106"/>
    </location>
</feature>
<feature type="helix" evidence="26">
    <location>
        <begin position="112"/>
        <end position="114"/>
    </location>
</feature>
<feature type="strand" evidence="26">
    <location>
        <begin position="120"/>
        <end position="122"/>
    </location>
</feature>
<feature type="strand" evidence="26">
    <location>
        <begin position="134"/>
        <end position="136"/>
    </location>
</feature>
<feature type="turn" evidence="26">
    <location>
        <begin position="138"/>
        <end position="140"/>
    </location>
</feature>
<feature type="strand" evidence="27">
    <location>
        <begin position="142"/>
        <end position="144"/>
    </location>
</feature>
<feature type="helix" evidence="26">
    <location>
        <begin position="149"/>
        <end position="151"/>
    </location>
</feature>
<feature type="strand" evidence="29">
    <location>
        <begin position="152"/>
        <end position="155"/>
    </location>
</feature>
<feature type="helix" evidence="26">
    <location>
        <begin position="156"/>
        <end position="158"/>
    </location>
</feature>
<feature type="turn" evidence="28">
    <location>
        <begin position="159"/>
        <end position="162"/>
    </location>
</feature>
<feature type="helix" evidence="26">
    <location>
        <begin position="163"/>
        <end position="170"/>
    </location>
</feature>
<feature type="helix" evidence="26">
    <location>
        <begin position="172"/>
        <end position="174"/>
    </location>
</feature>
<feature type="strand" evidence="30">
    <location>
        <begin position="187"/>
        <end position="189"/>
    </location>
</feature>
<feature type="strand" evidence="28">
    <location>
        <begin position="190"/>
        <end position="192"/>
    </location>
</feature>
<feature type="helix" evidence="28">
    <location>
        <begin position="195"/>
        <end position="198"/>
    </location>
</feature>
<feature type="turn" evidence="28">
    <location>
        <begin position="199"/>
        <end position="201"/>
    </location>
</feature>
<feature type="helix" evidence="28">
    <location>
        <begin position="202"/>
        <end position="205"/>
    </location>
</feature>
<name>CSK2B_HUMAN</name>
<evidence type="ECO:0000250" key="1"/>
<evidence type="ECO:0000250" key="2">
    <source>
        <dbReference type="UniProtKB" id="P67871"/>
    </source>
</evidence>
<evidence type="ECO:0000269" key="3">
    <source>
    </source>
</evidence>
<evidence type="ECO:0000269" key="4">
    <source>
    </source>
</evidence>
<evidence type="ECO:0000269" key="5">
    <source>
    </source>
</evidence>
<evidence type="ECO:0000269" key="6">
    <source>
    </source>
</evidence>
<evidence type="ECO:0000269" key="7">
    <source>
    </source>
</evidence>
<evidence type="ECO:0000269" key="8">
    <source>
    </source>
</evidence>
<evidence type="ECO:0000269" key="9">
    <source>
    </source>
</evidence>
<evidence type="ECO:0000269" key="10">
    <source>
    </source>
</evidence>
<evidence type="ECO:0000269" key="11">
    <source>
    </source>
</evidence>
<evidence type="ECO:0000269" key="12">
    <source>
    </source>
</evidence>
<evidence type="ECO:0000269" key="13">
    <source>
    </source>
</evidence>
<evidence type="ECO:0000269" key="14">
    <source>
    </source>
</evidence>
<evidence type="ECO:0000269" key="15">
    <source>
    </source>
</evidence>
<evidence type="ECO:0000305" key="16"/>
<evidence type="ECO:0000312" key="17">
    <source>
        <dbReference type="HGNC" id="HGNC:2460"/>
    </source>
</evidence>
<evidence type="ECO:0007744" key="18">
    <source>
    </source>
</evidence>
<evidence type="ECO:0007744" key="19">
    <source>
    </source>
</evidence>
<evidence type="ECO:0007744" key="20">
    <source>
    </source>
</evidence>
<evidence type="ECO:0007744" key="21">
    <source>
    </source>
</evidence>
<evidence type="ECO:0007744" key="22">
    <source>
    </source>
</evidence>
<evidence type="ECO:0007744" key="23">
    <source>
    </source>
</evidence>
<evidence type="ECO:0007744" key="24">
    <source>
    </source>
</evidence>
<evidence type="ECO:0007829" key="25">
    <source>
        <dbReference type="PDB" id="1JWH"/>
    </source>
</evidence>
<evidence type="ECO:0007829" key="26">
    <source>
        <dbReference type="PDB" id="1QF8"/>
    </source>
</evidence>
<evidence type="ECO:0007829" key="27">
    <source>
        <dbReference type="PDB" id="3EED"/>
    </source>
</evidence>
<evidence type="ECO:0007829" key="28">
    <source>
        <dbReference type="PDB" id="4DGL"/>
    </source>
</evidence>
<evidence type="ECO:0007829" key="29">
    <source>
        <dbReference type="PDB" id="4MD7"/>
    </source>
</evidence>
<evidence type="ECO:0007829" key="30">
    <source>
        <dbReference type="PDB" id="4MD9"/>
    </source>
</evidence>
<evidence type="ECO:0007829" key="31">
    <source>
        <dbReference type="PDB" id="4NH1"/>
    </source>
</evidence>
<accession>P67870</accession>
<accession>B0UXA9</accession>
<accession>P07312</accession>
<accession>P13862</accession>
<accession>Q4VX47</accession>
<organism>
    <name type="scientific">Homo sapiens</name>
    <name type="common">Human</name>
    <dbReference type="NCBI Taxonomy" id="9606"/>
    <lineage>
        <taxon>Eukaryota</taxon>
        <taxon>Metazoa</taxon>
        <taxon>Chordata</taxon>
        <taxon>Craniata</taxon>
        <taxon>Vertebrata</taxon>
        <taxon>Euteleostomi</taxon>
        <taxon>Mammalia</taxon>
        <taxon>Eutheria</taxon>
        <taxon>Euarchontoglires</taxon>
        <taxon>Primates</taxon>
        <taxon>Haplorrhini</taxon>
        <taxon>Catarrhini</taxon>
        <taxon>Hominidae</taxon>
        <taxon>Homo</taxon>
    </lineage>
</organism>
<comment type="function">
    <text evidence="2 4 9">Regulatory subunit of casein kinase II/CK2. As part of the kinase complex regulates the basal catalytic activity of the alpha subunit a constitutively active serine/threonine-protein kinase that phosphorylates a large number of substrates containing acidic residues C-terminal to the phosphorylated serine or threonine (PubMed:11239457, PubMed:16818610). Participates in Wnt signaling (By similarity).</text>
</comment>
<comment type="function">
    <text evidence="10 12 14">(Microbial infection) Upon infection with Epstein-Barr virus (EBV), the interaction with viral EBNA1 increases the association of CK2 with PML proteins, which increases PML phosphorylation by CK2, triggering the polyubiquitylation and degradation of PML (PubMed:20719947, PubMed:24216761). Seems to also suppress EBV reactivation by mediating ARK2N and JUN at the Z promoter which inhibits BZLF1 transcrition (PubMed:31341047).</text>
</comment>
<comment type="subunit">
    <text evidence="1 3 4 5 6 7 8 9 12 14">Casein kinase II/CK2 is a tetramer composed of an alpha subunit, an alpha' subunit and two beta subunits. The beta subunit dimerization is mediated by zinc ions. Interacts with DYNLT2 (By similarity). Interacts with CD163. Also a component of a CK2-SPT16-SSRP1 complex composed of SSRP1, SUPT16H, CSNK2A1, CSNK2A2 and CSNK2B, the complex associating following UV irradiation. Interacts with MUSK; mediates phosphorylation of MUSK by CK2. Interacts with FGF1; this interaction is increased in the presence of FIBP, suggesting a possible cooperative interaction between CSNKB and FIBP in binding to FGF1. Interacts (via KSSR motif) with ARK2N (PubMed:24216761). Interacts with JUN and ARK2N; mediates the interaction between ARK2N and JUN (PubMed:31341047).</text>
</comment>
<comment type="subunit">
    <text evidence="12">(Microbial infection) Interacts (via KSSR motif) with Epstein-Barr virus EBNA1; the interaction requires phosphorylation of EBNA1, is independent and simultaneous to EBNA1 interaction with USP7 as well as necessary for PML nuclear bodies disruption by EBNA1. EBNA1, USP7 and CSNK2B form a ternary complex.</text>
</comment>
<comment type="interaction">
    <interactant intactId="EBI-348169">
        <id>P67870</id>
    </interactant>
    <interactant intactId="EBI-11524452">
        <id>Q8N9N5-2</id>
        <label>BANP</label>
    </interactant>
    <organismsDiffer>false</organismsDiffer>
    <experiments>3</experiments>
</comment>
<comment type="interaction">
    <interactant intactId="EBI-348169">
        <id>P67870</id>
    </interactant>
    <interactant intactId="EBI-766279">
        <id>O00555</id>
        <label>CACNA1A</label>
    </interactant>
    <organismsDiffer>false</organismsDiffer>
    <experiments>2</experiments>
</comment>
<comment type="interaction">
    <interactant intactId="EBI-348169">
        <id>P67870</id>
    </interactant>
    <interactant intactId="EBI-4392727">
        <id>O00257-3</id>
        <label>CBX4</label>
    </interactant>
    <organismsDiffer>false</organismsDiffer>
    <experiments>2</experiments>
</comment>
<comment type="interaction">
    <interactant intactId="EBI-348169">
        <id>P67870</id>
    </interactant>
    <interactant intactId="EBI-347804">
        <id>P68400</id>
        <label>CSNK2A1</label>
    </interactant>
    <organismsDiffer>false</organismsDiffer>
    <experiments>33</experiments>
</comment>
<comment type="interaction">
    <interactant intactId="EBI-348169">
        <id>P67870</id>
    </interactant>
    <interactant intactId="EBI-347451">
        <id>P19784</id>
        <label>CSNK2A2</label>
    </interactant>
    <organismsDiffer>false</organismsDiffer>
    <experiments>18</experiments>
</comment>
<comment type="interaction">
    <interactant intactId="EBI-348169">
        <id>P67870</id>
    </interactant>
    <interactant intactId="EBI-348169">
        <id>P67870</id>
        <label>CSNK2B</label>
    </interactant>
    <organismsDiffer>false</organismsDiffer>
    <experiments>7</experiments>
</comment>
<comment type="interaction">
    <interactant intactId="EBI-348169">
        <id>P67870</id>
    </interactant>
    <interactant intactId="EBI-1056240">
        <id>P01037</id>
        <label>CST1</label>
    </interactant>
    <organismsDiffer>false</organismsDiffer>
    <experiments>3</experiments>
</comment>
<comment type="interaction">
    <interactant intactId="EBI-348169">
        <id>P67870</id>
    </interactant>
    <interactant intactId="EBI-12845222">
        <id>Q9NVL1-2</id>
        <label>FAM86C1P</label>
    </interactant>
    <organismsDiffer>false</organismsDiffer>
    <experiments>3</experiments>
</comment>
<comment type="interaction">
    <interactant intactId="EBI-348169">
        <id>P67870</id>
    </interactant>
    <interactant intactId="EBI-7251368">
        <id>Q9BZE0</id>
        <label>GLIS2</label>
    </interactant>
    <organismsDiffer>false</organismsDiffer>
    <experiments>3</experiments>
</comment>
<comment type="interaction">
    <interactant intactId="EBI-348169">
        <id>P67870</id>
    </interactant>
    <interactant intactId="EBI-3893317">
        <id>P09067</id>
        <label>HOXB5</label>
    </interactant>
    <organismsDiffer>false</organismsDiffer>
    <experiments>3</experiments>
</comment>
<comment type="interaction">
    <interactant intactId="EBI-348169">
        <id>P67870</id>
    </interactant>
    <interactant intactId="EBI-715611">
        <id>Q9C086</id>
        <label>INO80B</label>
    </interactant>
    <organismsDiffer>false</organismsDiffer>
    <experiments>3</experiments>
</comment>
<comment type="interaction">
    <interactant intactId="EBI-348169">
        <id>P67870</id>
    </interactant>
    <interactant intactId="EBI-14086479">
        <id>Q8IVT4</id>
        <label>MGC50722</label>
    </interactant>
    <organismsDiffer>false</organismsDiffer>
    <experiments>3</experiments>
</comment>
<comment type="interaction">
    <interactant intactId="EBI-348169">
        <id>P67870</id>
    </interactant>
    <interactant intactId="EBI-9995414">
        <id>Q8NEJ9</id>
        <label>NGDN</label>
    </interactant>
    <organismsDiffer>false</organismsDiffer>
    <experiments>3</experiments>
</comment>
<comment type="interaction">
    <interactant intactId="EBI-348169">
        <id>P67870</id>
    </interactant>
    <interactant intactId="EBI-11742836">
        <id>Q16656-4</id>
        <label>NRF1</label>
    </interactant>
    <organismsDiffer>false</organismsDiffer>
    <experiments>3</experiments>
</comment>
<comment type="interaction">
    <interactant intactId="EBI-348169">
        <id>P67870</id>
    </interactant>
    <interactant intactId="EBI-741158">
        <id>Q96HA8</id>
        <label>NTAQ1</label>
    </interactant>
    <organismsDiffer>false</organismsDiffer>
    <experiments>3</experiments>
</comment>
<comment type="interaction">
    <interactant intactId="EBI-348169">
        <id>P67870</id>
    </interactant>
    <interactant intactId="EBI-2555014">
        <id>Q6VY07</id>
        <label>PACS1</label>
    </interactant>
    <organismsDiffer>false</organismsDiffer>
    <experiments>3</experiments>
</comment>
<comment type="interaction">
    <interactant intactId="EBI-348169">
        <id>P67870</id>
    </interactant>
    <interactant intactId="EBI-3937171">
        <id>Q9P1Y6</id>
        <label>PHRF1</label>
    </interactant>
    <organismsDiffer>false</organismsDiffer>
    <experiments>3</experiments>
</comment>
<comment type="interaction">
    <interactant intactId="EBI-348169">
        <id>P67870</id>
    </interactant>
    <interactant intactId="EBI-2568609">
        <id>Q9BSJ6</id>
        <label>PIMREG</label>
    </interactant>
    <organismsDiffer>false</organismsDiffer>
    <experiments>3</experiments>
</comment>
<comment type="interaction">
    <interactant intactId="EBI-348169">
        <id>P67870</id>
    </interactant>
    <interactant intactId="EBI-17630019">
        <id>Q9NZH5-2</id>
        <label>PTTG2</label>
    </interactant>
    <organismsDiffer>false</organismsDiffer>
    <experiments>3</experiments>
</comment>
<comment type="interaction">
    <interactant intactId="EBI-348169">
        <id>P67870</id>
    </interactant>
    <interactant intactId="EBI-395290">
        <id>Q14498</id>
        <label>RBM39</label>
    </interactant>
    <organismsDiffer>false</organismsDiffer>
    <experiments>4</experiments>
</comment>
<comment type="interaction">
    <interactant intactId="EBI-348169">
        <id>P67870</id>
    </interactant>
    <interactant intactId="EBI-722416">
        <id>Q99496</id>
        <label>RNF2</label>
    </interactant>
    <organismsDiffer>false</organismsDiffer>
    <experiments>5</experiments>
</comment>
<comment type="interaction">
    <interactant intactId="EBI-348169">
        <id>P67870</id>
    </interactant>
    <interactant intactId="EBI-1384149">
        <id>Q15349</id>
        <label>RPS6KA2</label>
    </interactant>
    <organismsDiffer>false</organismsDiffer>
    <experiments>4</experiments>
</comment>
<comment type="interaction">
    <interactant intactId="EBI-348169">
        <id>P67870</id>
    </interactant>
    <interactant intactId="EBI-1046616">
        <id>P51812</id>
        <label>RPS6KA3</label>
    </interactant>
    <organismsDiffer>false</organismsDiffer>
    <experiments>7</experiments>
</comment>
<comment type="interaction">
    <interactant intactId="EBI-348169">
        <id>P67870</id>
    </interactant>
    <interactant intactId="EBI-73869">
        <id>O75582</id>
        <label>RPS6KA5</label>
    </interactant>
    <organismsDiffer>false</organismsDiffer>
    <experiments>3</experiments>
</comment>
<comment type="interaction">
    <interactant intactId="EBI-348169">
        <id>P67870</id>
    </interactant>
    <interactant intactId="EBI-751012">
        <id>Q8WU57</id>
        <label>SELI</label>
    </interactant>
    <organismsDiffer>false</organismsDiffer>
    <experiments>3</experiments>
</comment>
<comment type="interaction">
    <interactant intactId="EBI-348169">
        <id>P67870</id>
    </interactant>
    <interactant intactId="EBI-1802965">
        <id>Q96EB6</id>
        <label>SIRT1</label>
    </interactant>
    <organismsDiffer>false</organismsDiffer>
    <experiments>5</experiments>
</comment>
<comment type="interaction">
    <interactant intactId="EBI-348169">
        <id>P67870</id>
    </interactant>
    <interactant intactId="EBI-11952651">
        <id>Q7Z6R9</id>
        <label>TFAP2D</label>
    </interactant>
    <organismsDiffer>false</organismsDiffer>
    <experiments>3</experiments>
</comment>
<comment type="interaction">
    <interactant intactId="EBI-348169">
        <id>P67870</id>
    </interactant>
    <interactant intactId="EBI-3939165">
        <id>O43711</id>
        <label>TLX3</label>
    </interactant>
    <organismsDiffer>false</organismsDiffer>
    <experiments>3</experiments>
</comment>
<comment type="interaction">
    <interactant intactId="EBI-348169">
        <id>P67870</id>
    </interactant>
    <interactant intactId="EBI-2130429">
        <id>Q9BYV2</id>
        <label>TRIM54</label>
    </interactant>
    <organismsDiffer>false</organismsDiffer>
    <experiments>3</experiments>
</comment>
<comment type="interaction">
    <interactant intactId="EBI-348169">
        <id>P67870</id>
    </interactant>
    <interactant intactId="EBI-1056675">
        <id>Q12792</id>
        <label>TWF1</label>
    </interactant>
    <organismsDiffer>false</organismsDiffer>
    <experiments>3</experiments>
</comment>
<comment type="interaction">
    <interactant intactId="EBI-348169">
        <id>P67870</id>
    </interactant>
    <interactant intactId="EBI-12040603">
        <id>Q9NZC7-5</id>
        <label>WWOX</label>
    </interactant>
    <organismsDiffer>false</organismsDiffer>
    <experiments>3</experiments>
</comment>
<comment type="interaction">
    <interactant intactId="EBI-348169">
        <id>P67870</id>
    </interactant>
    <interactant intactId="EBI-12884200">
        <id>P17023</id>
        <label>ZNF19</label>
    </interactant>
    <organismsDiffer>false</organismsDiffer>
    <experiments>3</experiments>
</comment>
<comment type="interaction">
    <interactant intactId="EBI-348169">
        <id>P67870</id>
    </interactant>
    <interactant intactId="EBI-11741890">
        <id>Q86VK4-3</id>
        <label>ZNF410</label>
    </interactant>
    <organismsDiffer>false</organismsDiffer>
    <experiments>3</experiments>
</comment>
<comment type="interaction">
    <interactant intactId="EBI-348169">
        <id>P67870</id>
    </interactant>
    <interactant intactId="EBI-644534">
        <id>Q9WTL8</id>
        <label>Bmal1</label>
    </interactant>
    <organismsDiffer>true</organismsDiffer>
    <experiments>4</experiments>
</comment>
<comment type="interaction">
    <interactant intactId="EBI-348169">
        <id>P67870</id>
    </interactant>
    <interactant intactId="EBI-908338">
        <id>Q9JK25</id>
        <label>Clip1</label>
    </interactant>
    <organismsDiffer>true</organismsDiffer>
    <experiments>2</experiments>
</comment>
<comment type="interaction">
    <interactant intactId="EBI-348169">
        <id>P67870</id>
    </interactant>
    <interactant intactId="EBI-79859">
        <id>O08785</id>
        <label>Clock</label>
    </interactant>
    <organismsDiffer>true</organismsDiffer>
    <experiments>2</experiments>
</comment>
<comment type="interaction">
    <interactant intactId="EBI-348169">
        <id>P67870</id>
    </interactant>
    <interactant intactId="EBI-1266607">
        <id>P97784</id>
        <label>Cry1</label>
    </interactant>
    <organismsDiffer>true</organismsDiffer>
    <experiments>2</experiments>
</comment>
<comment type="subcellular location">
    <subcellularLocation>
        <location evidence="14">Nucleus</location>
    </subcellularLocation>
</comment>
<comment type="domain">
    <text evidence="12">The KSSR motif is part of a protein interaction pocket that mediates interaction with cellular and viral proteins.</text>
</comment>
<comment type="PTM">
    <text evidence="6 11">Phosphorylated by alpha subunit.</text>
</comment>
<comment type="disease" evidence="13 15">
    <disease id="DI-05733">
        <name>Poirier-Bienvenu neurodevelopmental syndrome</name>
        <acronym>POBINDS</acronym>
        <description>An autosomal dominant neurodevelopmental disorder characterized by onset of seizures in infancy, developmental delay, impaired intellectual development, and poor or absent speech.</description>
        <dbReference type="MIM" id="618732"/>
    </disease>
    <text>The disease is caused by variants affecting the gene represented in this entry.</text>
</comment>
<comment type="similarity">
    <text evidence="16">Belongs to the casein kinase 2 subunit beta family.</text>
</comment>
<sequence>MSSSEEVSWISWFCGLRGNEFFCEVDEDYIQDKFNLTGLNEQVPHYRQALDMILDLEPDEELEDNPNQSDLIEQAAEMLYGLIHARYILTNRGIAQMLEKYQQGDFGYCPRVYCENQPMLPIGLSDIPGEAMVKLYCPKCMDVYTPKSSRHHHTDGAYFGTGFPHMLFMVHPEYRPKRPANQFVPRLYGFKIHPMAYQLQLQAASNFKSPVKTIR</sequence>
<proteinExistence type="evidence at protein level"/>